<evidence type="ECO:0000255" key="1">
    <source>
        <dbReference type="HAMAP-Rule" id="MF_00270"/>
    </source>
</evidence>
<evidence type="ECO:0000305" key="2"/>
<accession>A9KFL6</accession>
<protein>
    <recommendedName>
        <fullName evidence="1">Small ribosomal subunit protein bS18</fullName>
    </recommendedName>
    <alternativeName>
        <fullName evidence="2">30S ribosomal protein S18</fullName>
    </alternativeName>
</protein>
<keyword id="KW-0687">Ribonucleoprotein</keyword>
<keyword id="KW-0689">Ribosomal protein</keyword>
<keyword id="KW-0694">RNA-binding</keyword>
<keyword id="KW-0699">rRNA-binding</keyword>
<comment type="function">
    <text evidence="1">Binds as a heterodimer with protein bS6 to the central domain of the 16S rRNA, where it helps stabilize the platform of the 30S subunit.</text>
</comment>
<comment type="subunit">
    <text evidence="1">Part of the 30S ribosomal subunit. Forms a tight heterodimer with protein bS6.</text>
</comment>
<comment type="similarity">
    <text evidence="1">Belongs to the bacterial ribosomal protein bS18 family.</text>
</comment>
<feature type="chain" id="PRO_1000078698" description="Small ribosomal subunit protein bS18">
    <location>
        <begin position="1"/>
        <end position="73"/>
    </location>
</feature>
<proteinExistence type="inferred from homology"/>
<sequence>MSFRRKKFCAFDAKNLQEIDYKDVNTLKDYIMESGRVVPSRITGTCAKHQRQISRAIKLARYLALLPYCDTHQ</sequence>
<reference key="1">
    <citation type="journal article" date="2009" name="Infect. Immun.">
        <title>Comparative genomics reveal extensive transposon-mediated genomic plasticity and diversity among potential effector proteins within the genus Coxiella.</title>
        <authorList>
            <person name="Beare P.A."/>
            <person name="Unsworth N."/>
            <person name="Andoh M."/>
            <person name="Voth D.E."/>
            <person name="Omsland A."/>
            <person name="Gilk S.D."/>
            <person name="Williams K.P."/>
            <person name="Sobral B.W."/>
            <person name="Kupko J.J. III"/>
            <person name="Porcella S.F."/>
            <person name="Samuel J.E."/>
            <person name="Heinzen R.A."/>
        </authorList>
    </citation>
    <scope>NUCLEOTIDE SEQUENCE [LARGE SCALE GENOMIC DNA]</scope>
    <source>
        <strain>Dugway 5J108-111</strain>
    </source>
</reference>
<gene>
    <name evidence="1" type="primary">rpsR</name>
    <name type="ordered locus">CBUD_0928</name>
</gene>
<dbReference type="EMBL" id="CP000733">
    <property type="protein sequence ID" value="ABS76642.1"/>
    <property type="molecule type" value="Genomic_DNA"/>
</dbReference>
<dbReference type="RefSeq" id="WP_005768821.1">
    <property type="nucleotide sequence ID" value="NC_009727.1"/>
</dbReference>
<dbReference type="SMR" id="A9KFL6"/>
<dbReference type="KEGG" id="cbd:CBUD_0928"/>
<dbReference type="HOGENOM" id="CLU_148710_2_3_6"/>
<dbReference type="Proteomes" id="UP000008555">
    <property type="component" value="Chromosome"/>
</dbReference>
<dbReference type="GO" id="GO:0022627">
    <property type="term" value="C:cytosolic small ribosomal subunit"/>
    <property type="evidence" value="ECO:0007669"/>
    <property type="project" value="TreeGrafter"/>
</dbReference>
<dbReference type="GO" id="GO:0070181">
    <property type="term" value="F:small ribosomal subunit rRNA binding"/>
    <property type="evidence" value="ECO:0007669"/>
    <property type="project" value="TreeGrafter"/>
</dbReference>
<dbReference type="GO" id="GO:0003735">
    <property type="term" value="F:structural constituent of ribosome"/>
    <property type="evidence" value="ECO:0007669"/>
    <property type="project" value="InterPro"/>
</dbReference>
<dbReference type="GO" id="GO:0006412">
    <property type="term" value="P:translation"/>
    <property type="evidence" value="ECO:0007669"/>
    <property type="project" value="UniProtKB-UniRule"/>
</dbReference>
<dbReference type="FunFam" id="4.10.640.10:FF:000010">
    <property type="entry name" value="30S ribosomal protein S18"/>
    <property type="match status" value="1"/>
</dbReference>
<dbReference type="Gene3D" id="4.10.640.10">
    <property type="entry name" value="Ribosomal protein S18"/>
    <property type="match status" value="1"/>
</dbReference>
<dbReference type="HAMAP" id="MF_00270">
    <property type="entry name" value="Ribosomal_bS18"/>
    <property type="match status" value="1"/>
</dbReference>
<dbReference type="InterPro" id="IPR001648">
    <property type="entry name" value="Ribosomal_bS18"/>
</dbReference>
<dbReference type="InterPro" id="IPR036870">
    <property type="entry name" value="Ribosomal_bS18_sf"/>
</dbReference>
<dbReference type="NCBIfam" id="TIGR00165">
    <property type="entry name" value="S18"/>
    <property type="match status" value="1"/>
</dbReference>
<dbReference type="PANTHER" id="PTHR13479">
    <property type="entry name" value="30S RIBOSOMAL PROTEIN S18"/>
    <property type="match status" value="1"/>
</dbReference>
<dbReference type="PANTHER" id="PTHR13479:SF40">
    <property type="entry name" value="SMALL RIBOSOMAL SUBUNIT PROTEIN BS18M"/>
    <property type="match status" value="1"/>
</dbReference>
<dbReference type="Pfam" id="PF01084">
    <property type="entry name" value="Ribosomal_S18"/>
    <property type="match status" value="1"/>
</dbReference>
<dbReference type="PRINTS" id="PR00974">
    <property type="entry name" value="RIBOSOMALS18"/>
</dbReference>
<dbReference type="SUPFAM" id="SSF46911">
    <property type="entry name" value="Ribosomal protein S18"/>
    <property type="match status" value="1"/>
</dbReference>
<organism>
    <name type="scientific">Coxiella burnetii (strain Dugway 5J108-111)</name>
    <dbReference type="NCBI Taxonomy" id="434922"/>
    <lineage>
        <taxon>Bacteria</taxon>
        <taxon>Pseudomonadati</taxon>
        <taxon>Pseudomonadota</taxon>
        <taxon>Gammaproteobacteria</taxon>
        <taxon>Legionellales</taxon>
        <taxon>Coxiellaceae</taxon>
        <taxon>Coxiella</taxon>
    </lineage>
</organism>
<name>RS18_COXBN</name>